<sequence>MPLIKTPPPHGGKLVERVVKKRDIAEKMIAGCPTYELKPTTLPDGTPIRHVYREIMSVCYGFFSPVEGSMVQNELERVLNERRLLSEWIFPYPILFDISEEDYKALDVKEGDRLLLMLKGQPFATLDIEEVYKIDPVDVATRTFGTPEKNPEVVREPFDDKHPGYVIYKMHNPIILAGKYTIVNEPKFKEPYDRFWFPPSKCREVIKNEKKWRTVIAHQTRNVPHVGHEMLMKCAAYTGDIEPCHGILVNAIIGAKRRGDYPDEAILEGHEAVNKYGYIKPERHMVTFTLWDMRYGNPIESLLHGVIRQNMGCTHHMFGRDHAAVGEYYDMYATQILWSQGIPSFGFEAPPNEVDYGLKIIPQNMAEFWYCPICQEIAYSENCGHTDAKQKFSGSFLRGMVAEGVFPPRVVMRPEVYKQIVKWWKVYNYPFVNRKYLELKNKELEIDLPAMEVPKA</sequence>
<accession>O28606</accession>
<feature type="chain" id="PRO_0000105946" description="Sulfate adenylyltransferase">
    <location>
        <begin position="1"/>
        <end position="456"/>
    </location>
</feature>
<name>SAT_ARCFU</name>
<organism>
    <name type="scientific">Archaeoglobus fulgidus (strain ATCC 49558 / DSM 4304 / JCM 9628 / NBRC 100126 / VC-16)</name>
    <dbReference type="NCBI Taxonomy" id="224325"/>
    <lineage>
        <taxon>Archaea</taxon>
        <taxon>Methanobacteriati</taxon>
        <taxon>Methanobacteriota</taxon>
        <taxon>Archaeoglobi</taxon>
        <taxon>Archaeoglobales</taxon>
        <taxon>Archaeoglobaceae</taxon>
        <taxon>Archaeoglobus</taxon>
    </lineage>
</organism>
<comment type="catalytic activity">
    <reaction>
        <text>sulfate + ATP + H(+) = adenosine 5'-phosphosulfate + diphosphate</text>
        <dbReference type="Rhea" id="RHEA:18133"/>
        <dbReference type="ChEBI" id="CHEBI:15378"/>
        <dbReference type="ChEBI" id="CHEBI:16189"/>
        <dbReference type="ChEBI" id="CHEBI:30616"/>
        <dbReference type="ChEBI" id="CHEBI:33019"/>
        <dbReference type="ChEBI" id="CHEBI:58243"/>
        <dbReference type="EC" id="2.7.7.4"/>
    </reaction>
</comment>
<comment type="pathway">
    <text>Sulfur metabolism; hydrogen sulfide biosynthesis; sulfite from sulfate: step 1/3.</text>
</comment>
<comment type="similarity">
    <text evidence="1">Belongs to the sulfate adenylyltransferase family.</text>
</comment>
<comment type="sequence caution" evidence="1">
    <conflict type="erroneous initiation">
        <sequence resource="EMBL-CDS" id="AAB89581"/>
    </conflict>
</comment>
<keyword id="KW-0067">ATP-binding</keyword>
<keyword id="KW-0547">Nucleotide-binding</keyword>
<keyword id="KW-0548">Nucleotidyltransferase</keyword>
<keyword id="KW-1185">Reference proteome</keyword>
<keyword id="KW-0808">Transferase</keyword>
<protein>
    <recommendedName>
        <fullName>Sulfate adenylyltransferase</fullName>
        <ecNumber>2.7.7.4</ecNumber>
    </recommendedName>
    <alternativeName>
        <fullName>ATP-sulfurylase</fullName>
    </alternativeName>
    <alternativeName>
        <fullName>Sulfate adenylate transferase</fullName>
        <shortName>SAT</shortName>
    </alternativeName>
</protein>
<gene>
    <name type="primary">sat</name>
    <name type="ordered locus">AF_1667</name>
</gene>
<proteinExistence type="inferred from homology"/>
<dbReference type="EC" id="2.7.7.4"/>
<dbReference type="EMBL" id="U66886">
    <property type="protein sequence ID" value="AAC46388.1"/>
    <property type="molecule type" value="Genomic_DNA"/>
</dbReference>
<dbReference type="EMBL" id="AE000782">
    <property type="protein sequence ID" value="AAB89581.1"/>
    <property type="status" value="ALT_INIT"/>
    <property type="molecule type" value="Genomic_DNA"/>
</dbReference>
<dbReference type="PIR" id="B69458">
    <property type="entry name" value="B69458"/>
</dbReference>
<dbReference type="RefSeq" id="WP_048064439.1">
    <property type="nucleotide sequence ID" value="NC_000917.1"/>
</dbReference>
<dbReference type="SMR" id="O28606"/>
<dbReference type="STRING" id="224325.AF_1667"/>
<dbReference type="PaxDb" id="224325-AF_1667"/>
<dbReference type="EnsemblBacteria" id="AAB89581">
    <property type="protein sequence ID" value="AAB89581"/>
    <property type="gene ID" value="AF_1667"/>
</dbReference>
<dbReference type="GeneID" id="24795410"/>
<dbReference type="KEGG" id="afu:AF_1667"/>
<dbReference type="eggNOG" id="arCOG04191">
    <property type="taxonomic scope" value="Archaea"/>
</dbReference>
<dbReference type="HOGENOM" id="CLU_022950_1_1_2"/>
<dbReference type="OrthoDB" id="6358at2157"/>
<dbReference type="PhylomeDB" id="O28606"/>
<dbReference type="BioCyc" id="MetaCyc:MONOMER-12497"/>
<dbReference type="UniPathway" id="UPA00140">
    <property type="reaction ID" value="UER00204"/>
</dbReference>
<dbReference type="Proteomes" id="UP000002199">
    <property type="component" value="Chromosome"/>
</dbReference>
<dbReference type="GO" id="GO:0005524">
    <property type="term" value="F:ATP binding"/>
    <property type="evidence" value="ECO:0007669"/>
    <property type="project" value="UniProtKB-KW"/>
</dbReference>
<dbReference type="GO" id="GO:0004781">
    <property type="term" value="F:sulfate adenylyltransferase (ATP) activity"/>
    <property type="evidence" value="ECO:0007669"/>
    <property type="project" value="UniProtKB-UniRule"/>
</dbReference>
<dbReference type="GO" id="GO:0070814">
    <property type="term" value="P:hydrogen sulfide biosynthetic process"/>
    <property type="evidence" value="ECO:0007669"/>
    <property type="project" value="UniProtKB-UniRule"/>
</dbReference>
<dbReference type="GO" id="GO:0000103">
    <property type="term" value="P:sulfate assimilation"/>
    <property type="evidence" value="ECO:0007669"/>
    <property type="project" value="UniProtKB-UniRule"/>
</dbReference>
<dbReference type="CDD" id="cd00517">
    <property type="entry name" value="ATPS"/>
    <property type="match status" value="1"/>
</dbReference>
<dbReference type="Gene3D" id="3.40.50.620">
    <property type="entry name" value="HUPs"/>
    <property type="match status" value="1"/>
</dbReference>
<dbReference type="Gene3D" id="3.10.400.10">
    <property type="entry name" value="Sulfate adenylyltransferase"/>
    <property type="match status" value="1"/>
</dbReference>
<dbReference type="HAMAP" id="MF_00066">
    <property type="entry name" value="Sulf_adenylyltr"/>
    <property type="match status" value="1"/>
</dbReference>
<dbReference type="InterPro" id="IPR025980">
    <property type="entry name" value="ATP-Sase_PUA-like_dom"/>
</dbReference>
<dbReference type="InterPro" id="IPR015947">
    <property type="entry name" value="PUA-like_sf"/>
</dbReference>
<dbReference type="InterPro" id="IPR014729">
    <property type="entry name" value="Rossmann-like_a/b/a_fold"/>
</dbReference>
<dbReference type="InterPro" id="IPR020792">
    <property type="entry name" value="SO4_adenylyltransferase_pro"/>
</dbReference>
<dbReference type="InterPro" id="IPR024951">
    <property type="entry name" value="Sulfurylase_cat_dom"/>
</dbReference>
<dbReference type="InterPro" id="IPR002650">
    <property type="entry name" value="Sulphate_adenylyltransferase"/>
</dbReference>
<dbReference type="NCBIfam" id="NF003166">
    <property type="entry name" value="PRK04149.1"/>
    <property type="match status" value="1"/>
</dbReference>
<dbReference type="NCBIfam" id="TIGR00339">
    <property type="entry name" value="sopT"/>
    <property type="match status" value="1"/>
</dbReference>
<dbReference type="PANTHER" id="PTHR43509">
    <property type="match status" value="1"/>
</dbReference>
<dbReference type="PANTHER" id="PTHR43509:SF1">
    <property type="entry name" value="SULFATE ADENYLYLTRANSFERASE"/>
    <property type="match status" value="1"/>
</dbReference>
<dbReference type="Pfam" id="PF01747">
    <property type="entry name" value="ATP-sulfurylase"/>
    <property type="match status" value="1"/>
</dbReference>
<dbReference type="Pfam" id="PF14306">
    <property type="entry name" value="PUA_2"/>
    <property type="match status" value="1"/>
</dbReference>
<dbReference type="SUPFAM" id="SSF52374">
    <property type="entry name" value="Nucleotidylyl transferase"/>
    <property type="match status" value="1"/>
</dbReference>
<dbReference type="SUPFAM" id="SSF88697">
    <property type="entry name" value="PUA domain-like"/>
    <property type="match status" value="1"/>
</dbReference>
<evidence type="ECO:0000305" key="1"/>
<reference key="1">
    <citation type="journal article" date="1998" name="FEMS Microbiol. Lett.">
        <title>Dissimilatory ATP sulfurylase from the hyperthermophilic sulfate reducer Archaeoglobus fulgidus belongs to the group of homo-oligomeric ATP sulfurylases.</title>
        <authorList>
            <person name="Sperling D."/>
            <person name="Kappler U."/>
            <person name="Wynen A."/>
            <person name="Dahl C."/>
            <person name="Trueper H.G."/>
        </authorList>
    </citation>
    <scope>NUCLEOTIDE SEQUENCE [GENOMIC DNA]</scope>
    <source>
        <strain>ATCC 49558 / DSM 4304 / JCM 9628 / NBRC 100126 / VC-16</strain>
    </source>
</reference>
<reference key="2">
    <citation type="journal article" date="1997" name="Nature">
        <title>The complete genome sequence of the hyperthermophilic, sulphate-reducing archaeon Archaeoglobus fulgidus.</title>
        <authorList>
            <person name="Klenk H.-P."/>
            <person name="Clayton R.A."/>
            <person name="Tomb J.-F."/>
            <person name="White O."/>
            <person name="Nelson K.E."/>
            <person name="Ketchum K.A."/>
            <person name="Dodson R.J."/>
            <person name="Gwinn M.L."/>
            <person name="Hickey E.K."/>
            <person name="Peterson J.D."/>
            <person name="Richardson D.L."/>
            <person name="Kerlavage A.R."/>
            <person name="Graham D.E."/>
            <person name="Kyrpides N.C."/>
            <person name="Fleischmann R.D."/>
            <person name="Quackenbush J."/>
            <person name="Lee N.H."/>
            <person name="Sutton G.G."/>
            <person name="Gill S.R."/>
            <person name="Kirkness E.F."/>
            <person name="Dougherty B.A."/>
            <person name="McKenney K."/>
            <person name="Adams M.D."/>
            <person name="Loftus B.J."/>
            <person name="Peterson S.N."/>
            <person name="Reich C.I."/>
            <person name="McNeil L.K."/>
            <person name="Badger J.H."/>
            <person name="Glodek A."/>
            <person name="Zhou L."/>
            <person name="Overbeek R."/>
            <person name="Gocayne J.D."/>
            <person name="Weidman J.F."/>
            <person name="McDonald L.A."/>
            <person name="Utterback T.R."/>
            <person name="Cotton M.D."/>
            <person name="Spriggs T."/>
            <person name="Artiach P."/>
            <person name="Kaine B.P."/>
            <person name="Sykes S.M."/>
            <person name="Sadow P.W."/>
            <person name="D'Andrea K.P."/>
            <person name="Bowman C."/>
            <person name="Fujii C."/>
            <person name="Garland S.A."/>
            <person name="Mason T.M."/>
            <person name="Olsen G.J."/>
            <person name="Fraser C.M."/>
            <person name="Smith H.O."/>
            <person name="Woese C.R."/>
            <person name="Venter J.C."/>
        </authorList>
    </citation>
    <scope>NUCLEOTIDE SEQUENCE [LARGE SCALE GENOMIC DNA]</scope>
    <source>
        <strain>ATCC 49558 / DSM 4304 / JCM 9628 / NBRC 100126 / VC-16</strain>
    </source>
</reference>